<organism>
    <name type="scientific">Helicobacter pylori (strain ATCC 700392 / 26695)</name>
    <name type="common">Campylobacter pylori</name>
    <dbReference type="NCBI Taxonomy" id="85962"/>
    <lineage>
        <taxon>Bacteria</taxon>
        <taxon>Pseudomonadati</taxon>
        <taxon>Campylobacterota</taxon>
        <taxon>Epsilonproteobacteria</taxon>
        <taxon>Campylobacterales</taxon>
        <taxon>Helicobacteraceae</taxon>
        <taxon>Helicobacter</taxon>
    </lineage>
</organism>
<name>FABI_HELPY</name>
<evidence type="ECO:0000250" key="1"/>
<evidence type="ECO:0000269" key="2">
    <source>
    </source>
</evidence>
<evidence type="ECO:0000305" key="3"/>
<evidence type="ECO:0007829" key="4">
    <source>
        <dbReference type="PDB" id="2PD4"/>
    </source>
</evidence>
<dbReference type="EC" id="1.3.1.9"/>
<dbReference type="EMBL" id="AE000511">
    <property type="protein sequence ID" value="AAD07262.1"/>
    <property type="molecule type" value="Genomic_DNA"/>
</dbReference>
<dbReference type="PIR" id="C64544">
    <property type="entry name" value="C64544"/>
</dbReference>
<dbReference type="RefSeq" id="NP_206994.1">
    <property type="nucleotide sequence ID" value="NC_000915.1"/>
</dbReference>
<dbReference type="RefSeq" id="WP_000506216.1">
    <property type="nucleotide sequence ID" value="NC_018939.1"/>
</dbReference>
<dbReference type="PDB" id="2PD3">
    <property type="method" value="X-ray"/>
    <property type="resolution" value="2.50 A"/>
    <property type="chains" value="A/B/C/D=1-275"/>
</dbReference>
<dbReference type="PDB" id="2PD4">
    <property type="method" value="X-ray"/>
    <property type="resolution" value="2.30 A"/>
    <property type="chains" value="A/B/C/D=1-275"/>
</dbReference>
<dbReference type="PDBsum" id="2PD3"/>
<dbReference type="PDBsum" id="2PD4"/>
<dbReference type="SMR" id="O24990"/>
<dbReference type="FunCoup" id="O24990">
    <property type="interactions" value="271"/>
</dbReference>
<dbReference type="IntAct" id="O24990">
    <property type="interactions" value="1"/>
</dbReference>
<dbReference type="STRING" id="85962.HP_0195"/>
<dbReference type="DrugBank" id="DB04393">
    <property type="generic name" value="Soneclosan"/>
</dbReference>
<dbReference type="DrugBank" id="DB08604">
    <property type="generic name" value="Triclosan"/>
</dbReference>
<dbReference type="PaxDb" id="85962-C694_00970"/>
<dbReference type="EnsemblBacteria" id="AAD07262">
    <property type="protein sequence ID" value="AAD07262"/>
    <property type="gene ID" value="HP_0195"/>
</dbReference>
<dbReference type="KEGG" id="heo:C694_00970"/>
<dbReference type="KEGG" id="hpy:HP_0195"/>
<dbReference type="PATRIC" id="fig|85962.47.peg.210"/>
<dbReference type="eggNOG" id="COG0623">
    <property type="taxonomic scope" value="Bacteria"/>
</dbReference>
<dbReference type="InParanoid" id="O24990"/>
<dbReference type="OrthoDB" id="9803628at2"/>
<dbReference type="PhylomeDB" id="O24990"/>
<dbReference type="BRENDA" id="1.3.1.9">
    <property type="organism ID" value="2604"/>
</dbReference>
<dbReference type="UniPathway" id="UPA00094"/>
<dbReference type="EvolutionaryTrace" id="O24990"/>
<dbReference type="Proteomes" id="UP000000429">
    <property type="component" value="Chromosome"/>
</dbReference>
<dbReference type="GO" id="GO:0004318">
    <property type="term" value="F:enoyl-[acyl-carrier-protein] reductase (NADH) activity"/>
    <property type="evidence" value="ECO:0000250"/>
    <property type="project" value="UniProtKB"/>
</dbReference>
<dbReference type="GO" id="GO:0042802">
    <property type="term" value="F:identical protein binding"/>
    <property type="evidence" value="ECO:0000250"/>
    <property type="project" value="UniProtKB"/>
</dbReference>
<dbReference type="GO" id="GO:0030497">
    <property type="term" value="P:fatty acid elongation"/>
    <property type="evidence" value="ECO:0000250"/>
    <property type="project" value="UniProtKB"/>
</dbReference>
<dbReference type="CDD" id="cd05372">
    <property type="entry name" value="ENR_SDR"/>
    <property type="match status" value="1"/>
</dbReference>
<dbReference type="FunFam" id="1.10.8.400:FF:000001">
    <property type="entry name" value="Enoyl-[acyl-carrier-protein] reductase [NADH]"/>
    <property type="match status" value="1"/>
</dbReference>
<dbReference type="FunFam" id="3.40.50.720:FF:000054">
    <property type="entry name" value="Enoyl-[acyl-carrier-protein] reductase [NADH]"/>
    <property type="match status" value="1"/>
</dbReference>
<dbReference type="Gene3D" id="1.10.8.400">
    <property type="entry name" value="Enoyl acyl carrier protein reductase"/>
    <property type="match status" value="1"/>
</dbReference>
<dbReference type="Gene3D" id="3.40.50.720">
    <property type="entry name" value="NAD(P)-binding Rossmann-like Domain"/>
    <property type="match status" value="1"/>
</dbReference>
<dbReference type="InterPro" id="IPR014358">
    <property type="entry name" value="Enoyl-ACP_Rdtase_NADH"/>
</dbReference>
<dbReference type="InterPro" id="IPR036291">
    <property type="entry name" value="NAD(P)-bd_dom_sf"/>
</dbReference>
<dbReference type="InterPro" id="IPR002347">
    <property type="entry name" value="SDR_fam"/>
</dbReference>
<dbReference type="NCBIfam" id="NF006266">
    <property type="entry name" value="PRK08415.1"/>
    <property type="match status" value="1"/>
</dbReference>
<dbReference type="PANTHER" id="PTHR43159">
    <property type="entry name" value="ENOYL-[ACYL-CARRIER-PROTEIN] REDUCTASE"/>
    <property type="match status" value="1"/>
</dbReference>
<dbReference type="PANTHER" id="PTHR43159:SF2">
    <property type="entry name" value="ENOYL-[ACYL-CARRIER-PROTEIN] REDUCTASE [NADH], CHLOROPLASTIC"/>
    <property type="match status" value="1"/>
</dbReference>
<dbReference type="Pfam" id="PF13561">
    <property type="entry name" value="adh_short_C2"/>
    <property type="match status" value="1"/>
</dbReference>
<dbReference type="PIRSF" id="PIRSF000094">
    <property type="entry name" value="Enoyl-ACP_rdct"/>
    <property type="match status" value="1"/>
</dbReference>
<dbReference type="PRINTS" id="PR00081">
    <property type="entry name" value="GDHRDH"/>
</dbReference>
<dbReference type="SUPFAM" id="SSF51735">
    <property type="entry name" value="NAD(P)-binding Rossmann-fold domains"/>
    <property type="match status" value="1"/>
</dbReference>
<proteinExistence type="evidence at protein level"/>
<keyword id="KW-0002">3D-structure</keyword>
<keyword id="KW-0275">Fatty acid biosynthesis</keyword>
<keyword id="KW-0276">Fatty acid metabolism</keyword>
<keyword id="KW-0444">Lipid biosynthesis</keyword>
<keyword id="KW-0443">Lipid metabolism</keyword>
<keyword id="KW-0520">NAD</keyword>
<keyword id="KW-0560">Oxidoreductase</keyword>
<keyword id="KW-1185">Reference proteome</keyword>
<reference key="1">
    <citation type="journal article" date="1997" name="Nature">
        <title>The complete genome sequence of the gastric pathogen Helicobacter pylori.</title>
        <authorList>
            <person name="Tomb J.-F."/>
            <person name="White O."/>
            <person name="Kerlavage A.R."/>
            <person name="Clayton R.A."/>
            <person name="Sutton G.G."/>
            <person name="Fleischmann R.D."/>
            <person name="Ketchum K.A."/>
            <person name="Klenk H.-P."/>
            <person name="Gill S.R."/>
            <person name="Dougherty B.A."/>
            <person name="Nelson K.E."/>
            <person name="Quackenbush J."/>
            <person name="Zhou L."/>
            <person name="Kirkness E.F."/>
            <person name="Peterson S.N."/>
            <person name="Loftus B.J."/>
            <person name="Richardson D.L."/>
            <person name="Dodson R.J."/>
            <person name="Khalak H.G."/>
            <person name="Glodek A."/>
            <person name="McKenney K."/>
            <person name="FitzGerald L.M."/>
            <person name="Lee N."/>
            <person name="Adams M.D."/>
            <person name="Hickey E.K."/>
            <person name="Berg D.E."/>
            <person name="Gocayne J.D."/>
            <person name="Utterback T.R."/>
            <person name="Peterson J.D."/>
            <person name="Kelley J.M."/>
            <person name="Cotton M.D."/>
            <person name="Weidman J.F."/>
            <person name="Fujii C."/>
            <person name="Bowman C."/>
            <person name="Watthey L."/>
            <person name="Wallin E."/>
            <person name="Hayes W.S."/>
            <person name="Borodovsky M."/>
            <person name="Karp P.D."/>
            <person name="Smith H.O."/>
            <person name="Fraser C.M."/>
            <person name="Venter J.C."/>
        </authorList>
    </citation>
    <scope>NUCLEOTIDE SEQUENCE [LARGE SCALE GENOMIC DNA]</scope>
    <source>
        <strain>ATCC 700392 / 26695</strain>
    </source>
</reference>
<reference key="2">
    <citation type="journal article" date="2007" name="Proteins">
        <title>Crystal structure of the Helicobacter pylori enoyl-acyl carrier protein reductase in complex with hydroxydiphenyl ether compounds, triclosan and diclosan.</title>
        <authorList>
            <person name="Lee H.H."/>
            <person name="Moon J."/>
            <person name="Suh S.W."/>
        </authorList>
    </citation>
    <scope>X-RAY CRYSTALLOGRAPHY (2.5 ANGSTROMS) IN COMPLEX WITH NAD AND INHIBITORS</scope>
    <scope>SUBUNIT</scope>
</reference>
<comment type="function">
    <text evidence="1">Catalyzes the reduction of a carbon-carbon double bond in an enoyl moiety that is covalently linked to an acyl carrier protein (ACP). Involved in the elongation cycle of fatty acid which are used in the lipid metabolism (By similarity).</text>
</comment>
<comment type="catalytic activity">
    <reaction>
        <text>a 2,3-saturated acyl-[ACP] + NAD(+) = a (2E)-enoyl-[ACP] + NADH + H(+)</text>
        <dbReference type="Rhea" id="RHEA:10240"/>
        <dbReference type="Rhea" id="RHEA-COMP:9925"/>
        <dbReference type="Rhea" id="RHEA-COMP:9926"/>
        <dbReference type="ChEBI" id="CHEBI:15378"/>
        <dbReference type="ChEBI" id="CHEBI:57540"/>
        <dbReference type="ChEBI" id="CHEBI:57945"/>
        <dbReference type="ChEBI" id="CHEBI:78784"/>
        <dbReference type="ChEBI" id="CHEBI:78785"/>
        <dbReference type="EC" id="1.3.1.9"/>
    </reaction>
</comment>
<comment type="pathway">
    <text>Lipid metabolism; fatty acid biosynthesis.</text>
</comment>
<comment type="subunit">
    <text evidence="2">Homotetramer.</text>
</comment>
<comment type="similarity">
    <text evidence="3">Belongs to the short-chain dehydrogenases/reductases (SDR) family. FabI subfamily.</text>
</comment>
<sequence length="275" mass="29981">MGFLKGKKGLIVGVANNKSIAYGIAQSCFNQGATLAFTYLNESLEKRVRPIAQELNSPYVYELDVSKEEHFKSLYNSVKKDLGSLDFIVHSVAFAPKEALEGSLLETSKSAFNTAMEISVYSLIELTNTLKPLLNNGASVLTLSYLGSTKYMAHYNVMGLAKAALESAVRYLAVDLGKHHIRVNALSAGPIRTLASSGIADFRMILKWNEINAPLRKNVSLEEVGNAGMYLLSSLSSGVSGEVHFVDAGYHVMGMGAVEEKDNKATLLWDLHKEQ</sequence>
<feature type="chain" id="PRO_0000054902" description="Enoyl-[acyl-carrier-protein] reductase [NADH] FabI">
    <location>
        <begin position="1"/>
        <end position="275"/>
    </location>
</feature>
<feature type="active site" description="Proton acceptor" evidence="1">
    <location>
        <position position="145"/>
    </location>
</feature>
<feature type="active site" description="Proton acceptor">
    <location>
        <position position="155"/>
    </location>
</feature>
<feature type="binding site" evidence="2">
    <location>
        <position position="13"/>
    </location>
    <ligand>
        <name>NAD(+)</name>
        <dbReference type="ChEBI" id="CHEBI:57540"/>
    </ligand>
</feature>
<feature type="binding site" evidence="2">
    <location>
        <begin position="19"/>
        <end position="20"/>
    </location>
    <ligand>
        <name>NAD(+)</name>
        <dbReference type="ChEBI" id="CHEBI:57540"/>
    </ligand>
</feature>
<feature type="binding site" evidence="2">
    <location>
        <begin position="64"/>
        <end position="65"/>
    </location>
    <ligand>
        <name>NAD(+)</name>
        <dbReference type="ChEBI" id="CHEBI:57540"/>
    </ligand>
</feature>
<feature type="binding site" evidence="2">
    <location>
        <position position="92"/>
    </location>
    <ligand>
        <name>NAD(+)</name>
        <dbReference type="ChEBI" id="CHEBI:57540"/>
    </ligand>
</feature>
<feature type="binding site">
    <location>
        <position position="95"/>
    </location>
    <ligand>
        <name>substrate</name>
    </ligand>
</feature>
<feature type="binding site" evidence="2">
    <location>
        <position position="162"/>
    </location>
    <ligand>
        <name>NAD(+)</name>
        <dbReference type="ChEBI" id="CHEBI:57540"/>
    </ligand>
</feature>
<feature type="binding site" evidence="2">
    <location>
        <begin position="191"/>
        <end position="195"/>
    </location>
    <ligand>
        <name>NAD(+)</name>
        <dbReference type="ChEBI" id="CHEBI:57540"/>
    </ligand>
</feature>
<feature type="site" description="Involved in acyl-ACP binding" evidence="1">
    <location>
        <position position="203"/>
    </location>
</feature>
<feature type="turn" evidence="4">
    <location>
        <begin position="3"/>
        <end position="6"/>
    </location>
</feature>
<feature type="strand" evidence="4">
    <location>
        <begin position="8"/>
        <end position="12"/>
    </location>
</feature>
<feature type="helix" evidence="4">
    <location>
        <begin position="20"/>
        <end position="29"/>
    </location>
</feature>
<feature type="turn" evidence="4">
    <location>
        <begin position="30"/>
        <end position="32"/>
    </location>
</feature>
<feature type="strand" evidence="4">
    <location>
        <begin position="34"/>
        <end position="41"/>
    </location>
</feature>
<feature type="turn" evidence="4">
    <location>
        <begin position="42"/>
        <end position="44"/>
    </location>
</feature>
<feature type="helix" evidence="4">
    <location>
        <begin position="45"/>
        <end position="54"/>
    </location>
</feature>
<feature type="strand" evidence="4">
    <location>
        <begin position="60"/>
        <end position="62"/>
    </location>
</feature>
<feature type="helix" evidence="4">
    <location>
        <begin position="68"/>
        <end position="81"/>
    </location>
</feature>
<feature type="strand" evidence="4">
    <location>
        <begin position="85"/>
        <end position="90"/>
    </location>
</feature>
<feature type="helix" evidence="4">
    <location>
        <begin position="97"/>
        <end position="100"/>
    </location>
</feature>
<feature type="helix" evidence="4">
    <location>
        <begin position="104"/>
        <end position="106"/>
    </location>
</feature>
<feature type="helix" evidence="4">
    <location>
        <begin position="109"/>
        <end position="119"/>
    </location>
</feature>
<feature type="helix" evidence="4">
    <location>
        <begin position="121"/>
        <end position="130"/>
    </location>
</feature>
<feature type="helix" evidence="4">
    <location>
        <begin position="131"/>
        <end position="133"/>
    </location>
</feature>
<feature type="strand" evidence="4">
    <location>
        <begin position="134"/>
        <end position="144"/>
    </location>
</feature>
<feature type="helix" evidence="4">
    <location>
        <begin position="146"/>
        <end position="148"/>
    </location>
</feature>
<feature type="helix" evidence="4">
    <location>
        <begin position="156"/>
        <end position="177"/>
    </location>
</feature>
<feature type="turn" evidence="4">
    <location>
        <begin position="178"/>
        <end position="180"/>
    </location>
</feature>
<feature type="strand" evidence="4">
    <location>
        <begin position="182"/>
        <end position="188"/>
    </location>
</feature>
<feature type="helix" evidence="4">
    <location>
        <begin position="196"/>
        <end position="198"/>
    </location>
</feature>
<feature type="helix" evidence="4">
    <location>
        <begin position="202"/>
        <end position="212"/>
    </location>
</feature>
<feature type="helix" evidence="4">
    <location>
        <begin position="221"/>
        <end position="232"/>
    </location>
</feature>
<feature type="helix" evidence="4">
    <location>
        <begin position="234"/>
        <end position="236"/>
    </location>
</feature>
<feature type="strand" evidence="4">
    <location>
        <begin position="243"/>
        <end position="247"/>
    </location>
</feature>
<feature type="helix" evidence="4">
    <location>
        <begin position="250"/>
        <end position="252"/>
    </location>
</feature>
<feature type="strand" evidence="4">
    <location>
        <begin position="253"/>
        <end position="255"/>
    </location>
</feature>
<feature type="turn" evidence="4">
    <location>
        <begin position="262"/>
        <end position="265"/>
    </location>
</feature>
<feature type="helix" evidence="4">
    <location>
        <begin position="268"/>
        <end position="271"/>
    </location>
</feature>
<gene>
    <name type="primary">fabI</name>
    <name type="ordered locus">HP_0195</name>
</gene>
<accession>O24990</accession>
<protein>
    <recommendedName>
        <fullName>Enoyl-[acyl-carrier-protein] reductase [NADH] FabI</fullName>
        <shortName>ENR</shortName>
        <ecNumber>1.3.1.9</ecNumber>
    </recommendedName>
    <alternativeName>
        <fullName>NADH-dependent enoyl-ACP reductase</fullName>
    </alternativeName>
</protein>